<organism>
    <name type="scientific">Danio rerio</name>
    <name type="common">Zebrafish</name>
    <name type="synonym">Brachydanio rerio</name>
    <dbReference type="NCBI Taxonomy" id="7955"/>
    <lineage>
        <taxon>Eukaryota</taxon>
        <taxon>Metazoa</taxon>
        <taxon>Chordata</taxon>
        <taxon>Craniata</taxon>
        <taxon>Vertebrata</taxon>
        <taxon>Euteleostomi</taxon>
        <taxon>Actinopterygii</taxon>
        <taxon>Neopterygii</taxon>
        <taxon>Teleostei</taxon>
        <taxon>Ostariophysi</taxon>
        <taxon>Cypriniformes</taxon>
        <taxon>Danionidae</taxon>
        <taxon>Danioninae</taxon>
        <taxon>Danio</taxon>
    </lineage>
</organism>
<gene>
    <name type="primary">slu7</name>
    <name type="ORF">zgc:103640</name>
</gene>
<protein>
    <recommendedName>
        <fullName>Pre-mRNA-splicing factor SLU7</fullName>
    </recommendedName>
</protein>
<reference key="1">
    <citation type="submission" date="2004-11" db="EMBL/GenBank/DDBJ databases">
        <authorList>
            <consortium name="NIH - Zebrafish Gene Collection (ZGC) project"/>
        </authorList>
    </citation>
    <scope>NUCLEOTIDE SEQUENCE [LARGE SCALE MRNA]</scope>
    <source>
        <tissue>Larva</tissue>
    </source>
</reference>
<dbReference type="EMBL" id="BC085570">
    <property type="protein sequence ID" value="AAH85570.1"/>
    <property type="molecule type" value="mRNA"/>
</dbReference>
<dbReference type="RefSeq" id="NP_001007368.1">
    <property type="nucleotide sequence ID" value="NM_001007367.1"/>
</dbReference>
<dbReference type="SMR" id="Q5U3F2"/>
<dbReference type="BioGRID" id="93522">
    <property type="interactions" value="1"/>
</dbReference>
<dbReference type="FunCoup" id="Q5U3F2">
    <property type="interactions" value="2947"/>
</dbReference>
<dbReference type="STRING" id="7955.ENSDARP00000112935"/>
<dbReference type="PaxDb" id="7955-ENSDARP00000112935"/>
<dbReference type="GeneID" id="492495"/>
<dbReference type="KEGG" id="dre:492495"/>
<dbReference type="AGR" id="ZFIN:ZDB-GENE-041114-62"/>
<dbReference type="CTD" id="10569"/>
<dbReference type="ZFIN" id="ZDB-GENE-041114-62">
    <property type="gene designation" value="slu7"/>
</dbReference>
<dbReference type="eggNOG" id="KOG2560">
    <property type="taxonomic scope" value="Eukaryota"/>
</dbReference>
<dbReference type="InParanoid" id="Q5U3F2"/>
<dbReference type="OrthoDB" id="249612at2759"/>
<dbReference type="PhylomeDB" id="Q5U3F2"/>
<dbReference type="Reactome" id="R-DRE-72163">
    <property type="pathway name" value="mRNA Splicing - Major Pathway"/>
</dbReference>
<dbReference type="PRO" id="PR:Q5U3F2"/>
<dbReference type="Proteomes" id="UP000000437">
    <property type="component" value="Chromosome 14"/>
</dbReference>
<dbReference type="GO" id="GO:0005737">
    <property type="term" value="C:cytoplasm"/>
    <property type="evidence" value="ECO:0007669"/>
    <property type="project" value="UniProtKB-SubCell"/>
</dbReference>
<dbReference type="GO" id="GO:0016607">
    <property type="term" value="C:nuclear speck"/>
    <property type="evidence" value="ECO:0007669"/>
    <property type="project" value="UniProtKB-SubCell"/>
</dbReference>
<dbReference type="GO" id="GO:0005681">
    <property type="term" value="C:spliceosomal complex"/>
    <property type="evidence" value="ECO:0000318"/>
    <property type="project" value="GO_Central"/>
</dbReference>
<dbReference type="GO" id="GO:0030628">
    <property type="term" value="F:pre-mRNA 3'-splice site binding"/>
    <property type="evidence" value="ECO:0007669"/>
    <property type="project" value="InterPro"/>
</dbReference>
<dbReference type="GO" id="GO:0008270">
    <property type="term" value="F:zinc ion binding"/>
    <property type="evidence" value="ECO:0007669"/>
    <property type="project" value="UniProtKB-KW"/>
</dbReference>
<dbReference type="GO" id="GO:0000398">
    <property type="term" value="P:mRNA splicing, via spliceosome"/>
    <property type="evidence" value="ECO:0007669"/>
    <property type="project" value="InterPro"/>
</dbReference>
<dbReference type="GO" id="GO:0008380">
    <property type="term" value="P:RNA splicing"/>
    <property type="evidence" value="ECO:0000318"/>
    <property type="project" value="GO_Central"/>
</dbReference>
<dbReference type="InterPro" id="IPR021715">
    <property type="entry name" value="Slu7_dom"/>
</dbReference>
<dbReference type="InterPro" id="IPR039974">
    <property type="entry name" value="Splicing_factor_SLU7"/>
</dbReference>
<dbReference type="PANTHER" id="PTHR12942:SF2">
    <property type="entry name" value="PRE-MRNA-SPLICING FACTOR SLU7"/>
    <property type="match status" value="1"/>
</dbReference>
<dbReference type="PANTHER" id="PTHR12942">
    <property type="entry name" value="STEP II SPLICING FACTOR SLU7"/>
    <property type="match status" value="1"/>
</dbReference>
<dbReference type="Pfam" id="PF11708">
    <property type="entry name" value="Slu7"/>
    <property type="match status" value="1"/>
</dbReference>
<name>SLU7_DANRE</name>
<comment type="function">
    <text evidence="1">Required for pre-mRNA splicing as component of the spliceosome. Participates in the second catalytic step of pre-mRNA splicing, when the free hydroxyl group of exon I attacks the 3'-splice site to generate spliced mRNA and the excised lariat intron. Required for holding exon 1 properly in the spliceosome and for correct AG identification when more than one possible AG exists in 3'-splicing site region. May be involved in the activation of proximal AG. Probably also involved in alternative splicing regulation.</text>
</comment>
<comment type="subunit">
    <text evidence="1">Component of pre-catalytic, catalytic and post-catalytic spliceosomes. Associates with the spliceosome prior to recognition of the 3'-splice site for step II, probably during catalysis of step I.</text>
</comment>
<comment type="subcellular location">
    <subcellularLocation>
        <location evidence="1">Nucleus</location>
    </subcellularLocation>
    <subcellularLocation>
        <location evidence="1">Nucleus speckle</location>
    </subcellularLocation>
    <subcellularLocation>
        <location evidence="1">Cytoplasm</location>
    </subcellularLocation>
    <text evidence="1">Predominantly nuclear.</text>
</comment>
<comment type="similarity">
    <text evidence="3">Belongs to the SLU7 family.</text>
</comment>
<sequence length="571" mass="66241">MAAEAGKASEGMVDLEEPKKMTREDWRKKKELEEQRKLGNAPAEVDEEGKDINPHIPQYISSVPWYIDPSKRPTLKHQRPQEENQSKFAPIGDWYKRGVQEKSVNTKYRKGACENCGALTHKKKDCLERPRKVGAKFSGTGIAPDEHQQVQLSMDYDGKRDRWNGYDPDEHMRIVEEYSKVDLAKRTLKAQKLQEELASGKLMDQANSRKHEEAVQDHSSEDEDEDKYVDDFDMPGQNFDSKRRITVRNLRIREDIAKYLRNLDPNSAYYDPKTRAMRENPYSNTGKNPEEVGYAGDNFVRYSGDTISMAQTQLFAWEAYEKGSEVHLQADPTKLELLHQSYKVKKDDFKEKQKETILEKYGGSEHLDAPPRELLLAQTEEYVEYSRHGAVLKGQEKAVAQSKYEEDVLNNNHTCIWGSYWKDGYWGYKCCHSMVKQSYCTGEAGKKVVSNSCTPFEEDVEEAQTSEEPKTLLQMHQEKLKDKKKKKKSKKHRDSDSSDEEDEAKKKEKLKKALSAEEQRLKQVAELMQVDERKRPYNSLMEVREPTEEEMEAFRMKRCRPDDPMASFLGQ</sequence>
<proteinExistence type="evidence at transcript level"/>
<evidence type="ECO:0000250" key="1">
    <source>
        <dbReference type="UniProtKB" id="O95391"/>
    </source>
</evidence>
<evidence type="ECO:0000256" key="2">
    <source>
        <dbReference type="SAM" id="MobiDB-lite"/>
    </source>
</evidence>
<evidence type="ECO:0000305" key="3"/>
<accession>Q5U3F2</accession>
<feature type="chain" id="PRO_0000289199" description="Pre-mRNA-splicing factor SLU7">
    <location>
        <begin position="1"/>
        <end position="571"/>
    </location>
</feature>
<feature type="zinc finger region" description="CCHC-type">
    <location>
        <begin position="111"/>
        <end position="128"/>
    </location>
</feature>
<feature type="region of interest" description="Disordered" evidence="2">
    <location>
        <begin position="1"/>
        <end position="91"/>
    </location>
</feature>
<feature type="region of interest" description="Disordered" evidence="2">
    <location>
        <begin position="199"/>
        <end position="235"/>
    </location>
</feature>
<feature type="region of interest" description="Disordered" evidence="2">
    <location>
        <begin position="462"/>
        <end position="571"/>
    </location>
</feature>
<feature type="compositionally biased region" description="Basic and acidic residues" evidence="2">
    <location>
        <begin position="16"/>
        <end position="37"/>
    </location>
</feature>
<feature type="compositionally biased region" description="Basic and acidic residues" evidence="2">
    <location>
        <begin position="207"/>
        <end position="219"/>
    </location>
</feature>
<feature type="compositionally biased region" description="Acidic residues" evidence="2">
    <location>
        <begin position="220"/>
        <end position="233"/>
    </location>
</feature>
<feature type="compositionally biased region" description="Basic residues" evidence="2">
    <location>
        <begin position="482"/>
        <end position="492"/>
    </location>
</feature>
<feature type="compositionally biased region" description="Basic and acidic residues" evidence="2">
    <location>
        <begin position="514"/>
        <end position="523"/>
    </location>
</feature>
<feature type="compositionally biased region" description="Basic and acidic residues" evidence="2">
    <location>
        <begin position="542"/>
        <end position="563"/>
    </location>
</feature>
<keyword id="KW-0963">Cytoplasm</keyword>
<keyword id="KW-0479">Metal-binding</keyword>
<keyword id="KW-0507">mRNA processing</keyword>
<keyword id="KW-0508">mRNA splicing</keyword>
<keyword id="KW-0539">Nucleus</keyword>
<keyword id="KW-1185">Reference proteome</keyword>
<keyword id="KW-0747">Spliceosome</keyword>
<keyword id="KW-0862">Zinc</keyword>
<keyword id="KW-0863">Zinc-finger</keyword>